<proteinExistence type="inferred from homology"/>
<name>RS15_CORA7</name>
<comment type="function">
    <text evidence="1">One of the primary rRNA binding proteins, it binds directly to 16S rRNA where it helps nucleate assembly of the platform of the 30S subunit by binding and bridging several RNA helices of the 16S rRNA.</text>
</comment>
<comment type="function">
    <text evidence="1">Forms an intersubunit bridge (bridge B4) with the 23S rRNA of the 50S subunit in the ribosome.</text>
</comment>
<comment type="subunit">
    <text evidence="1">Part of the 30S ribosomal subunit. Forms a bridge to the 50S subunit in the 70S ribosome, contacting the 23S rRNA.</text>
</comment>
<comment type="similarity">
    <text evidence="1">Belongs to the universal ribosomal protein uS15 family.</text>
</comment>
<feature type="chain" id="PRO_1000166414" description="Small ribosomal subunit protein uS15">
    <location>
        <begin position="1"/>
        <end position="89"/>
    </location>
</feature>
<evidence type="ECO:0000255" key="1">
    <source>
        <dbReference type="HAMAP-Rule" id="MF_01343"/>
    </source>
</evidence>
<evidence type="ECO:0000305" key="2"/>
<reference key="1">
    <citation type="journal article" date="2010" name="BMC Genomics">
        <title>Complete genome sequence and lifestyle of black-pigmented Corynebacterium aurimucosum ATCC 700975 (formerly C. nigricans CN-1) isolated from a vaginal swab of a woman with spontaneous abortion.</title>
        <authorList>
            <person name="Trost E."/>
            <person name="Gotker S."/>
            <person name="Schneider J."/>
            <person name="Schneiker-Bekel S."/>
            <person name="Szczepanowski R."/>
            <person name="Tilker A."/>
            <person name="Viehoever P."/>
            <person name="Arnold W."/>
            <person name="Bekel T."/>
            <person name="Blom J."/>
            <person name="Gartemann K.H."/>
            <person name="Linke B."/>
            <person name="Goesmann A."/>
            <person name="Puhler A."/>
            <person name="Shukla S.K."/>
            <person name="Tauch A."/>
        </authorList>
    </citation>
    <scope>NUCLEOTIDE SEQUENCE [LARGE SCALE GENOMIC DNA]</scope>
    <source>
        <strain>ATCC 700975 / DSM 44827 / CIP 107346 / CN-1</strain>
    </source>
</reference>
<protein>
    <recommendedName>
        <fullName evidence="1">Small ribosomal subunit protein uS15</fullName>
    </recommendedName>
    <alternativeName>
        <fullName evidence="2">30S ribosomal protein S15</fullName>
    </alternativeName>
</protein>
<organism>
    <name type="scientific">Corynebacterium aurimucosum (strain ATCC 700975 / DSM 44827 / CIP 107346 / CN-1)</name>
    <name type="common">Corynebacterium nigricans</name>
    <dbReference type="NCBI Taxonomy" id="548476"/>
    <lineage>
        <taxon>Bacteria</taxon>
        <taxon>Bacillati</taxon>
        <taxon>Actinomycetota</taxon>
        <taxon>Actinomycetes</taxon>
        <taxon>Mycobacteriales</taxon>
        <taxon>Corynebacteriaceae</taxon>
        <taxon>Corynebacterium</taxon>
    </lineage>
</organism>
<keyword id="KW-1185">Reference proteome</keyword>
<keyword id="KW-0687">Ribonucleoprotein</keyword>
<keyword id="KW-0689">Ribosomal protein</keyword>
<keyword id="KW-0694">RNA-binding</keyword>
<keyword id="KW-0699">rRNA-binding</keyword>
<gene>
    <name evidence="1" type="primary">rpsO</name>
    <name type="ordered locus">cauri_1521</name>
</gene>
<accession>C3PH10</accession>
<dbReference type="EMBL" id="CP001601">
    <property type="protein sequence ID" value="ACP33114.1"/>
    <property type="molecule type" value="Genomic_DNA"/>
</dbReference>
<dbReference type="RefSeq" id="WP_010190317.1">
    <property type="nucleotide sequence ID" value="NZ_ACLH01000084.1"/>
</dbReference>
<dbReference type="SMR" id="C3PH10"/>
<dbReference type="STRING" id="548476.cauri_1521"/>
<dbReference type="GeneID" id="31924151"/>
<dbReference type="KEGG" id="car:cauri_1521"/>
<dbReference type="eggNOG" id="COG0184">
    <property type="taxonomic scope" value="Bacteria"/>
</dbReference>
<dbReference type="HOGENOM" id="CLU_148518_0_0_11"/>
<dbReference type="OrthoDB" id="9799262at2"/>
<dbReference type="Proteomes" id="UP000002077">
    <property type="component" value="Chromosome"/>
</dbReference>
<dbReference type="GO" id="GO:0022627">
    <property type="term" value="C:cytosolic small ribosomal subunit"/>
    <property type="evidence" value="ECO:0007669"/>
    <property type="project" value="TreeGrafter"/>
</dbReference>
<dbReference type="GO" id="GO:0019843">
    <property type="term" value="F:rRNA binding"/>
    <property type="evidence" value="ECO:0007669"/>
    <property type="project" value="UniProtKB-UniRule"/>
</dbReference>
<dbReference type="GO" id="GO:0003735">
    <property type="term" value="F:structural constituent of ribosome"/>
    <property type="evidence" value="ECO:0007669"/>
    <property type="project" value="InterPro"/>
</dbReference>
<dbReference type="GO" id="GO:0006412">
    <property type="term" value="P:translation"/>
    <property type="evidence" value="ECO:0007669"/>
    <property type="project" value="UniProtKB-UniRule"/>
</dbReference>
<dbReference type="CDD" id="cd00353">
    <property type="entry name" value="Ribosomal_S15p_S13e"/>
    <property type="match status" value="1"/>
</dbReference>
<dbReference type="FunFam" id="1.10.287.10:FF:000002">
    <property type="entry name" value="30S ribosomal protein S15"/>
    <property type="match status" value="1"/>
</dbReference>
<dbReference type="Gene3D" id="6.10.250.3130">
    <property type="match status" value="1"/>
</dbReference>
<dbReference type="Gene3D" id="1.10.287.10">
    <property type="entry name" value="S15/NS1, RNA-binding"/>
    <property type="match status" value="1"/>
</dbReference>
<dbReference type="HAMAP" id="MF_01343_B">
    <property type="entry name" value="Ribosomal_uS15_B"/>
    <property type="match status" value="1"/>
</dbReference>
<dbReference type="InterPro" id="IPR000589">
    <property type="entry name" value="Ribosomal_uS15"/>
</dbReference>
<dbReference type="InterPro" id="IPR005290">
    <property type="entry name" value="Ribosomal_uS15_bac-type"/>
</dbReference>
<dbReference type="InterPro" id="IPR009068">
    <property type="entry name" value="uS15_NS1_RNA-bd_sf"/>
</dbReference>
<dbReference type="NCBIfam" id="TIGR00952">
    <property type="entry name" value="S15_bact"/>
    <property type="match status" value="1"/>
</dbReference>
<dbReference type="PANTHER" id="PTHR23321">
    <property type="entry name" value="RIBOSOMAL PROTEIN S15, BACTERIAL AND ORGANELLAR"/>
    <property type="match status" value="1"/>
</dbReference>
<dbReference type="PANTHER" id="PTHR23321:SF26">
    <property type="entry name" value="SMALL RIBOSOMAL SUBUNIT PROTEIN US15M"/>
    <property type="match status" value="1"/>
</dbReference>
<dbReference type="Pfam" id="PF00312">
    <property type="entry name" value="Ribosomal_S15"/>
    <property type="match status" value="1"/>
</dbReference>
<dbReference type="SMART" id="SM01387">
    <property type="entry name" value="Ribosomal_S15"/>
    <property type="match status" value="1"/>
</dbReference>
<dbReference type="SUPFAM" id="SSF47060">
    <property type="entry name" value="S15/NS1 RNA-binding domain"/>
    <property type="match status" value="1"/>
</dbReference>
<dbReference type="PROSITE" id="PS00362">
    <property type="entry name" value="RIBOSOMAL_S15"/>
    <property type="match status" value="1"/>
</dbReference>
<sequence length="89" mass="10270">MALSTEKKAEILKEYGLHETDTGSPEAQVALLTSRINNLTEHLKDHKHDHHSRRGLLLMVGRRRGLLKYLAANDVDRYRDLISRLGLRR</sequence>